<name>CMR7B_SACS2</name>
<evidence type="ECO:0000250" key="1"/>
<evidence type="ECO:0000305" key="2"/>
<evidence type="ECO:0000305" key="3">
    <source>
    </source>
</evidence>
<evidence type="ECO:0007829" key="4">
    <source>
        <dbReference type="PDB" id="2XVO"/>
    </source>
</evidence>
<reference key="1">
    <citation type="journal article" date="2001" name="Proc. Natl. Acad. Sci. U.S.A.">
        <title>The complete genome of the crenarchaeon Sulfolobus solfataricus P2.</title>
        <authorList>
            <person name="She Q."/>
            <person name="Singh R.K."/>
            <person name="Confalonieri F."/>
            <person name="Zivanovic Y."/>
            <person name="Allard G."/>
            <person name="Awayez M.J."/>
            <person name="Chan-Weiher C.C.-Y."/>
            <person name="Clausen I.G."/>
            <person name="Curtis B.A."/>
            <person name="De Moors A."/>
            <person name="Erauso G."/>
            <person name="Fletcher C."/>
            <person name="Gordon P.M.K."/>
            <person name="Heikamp-de Jong I."/>
            <person name="Jeffries A.C."/>
            <person name="Kozera C.J."/>
            <person name="Medina N."/>
            <person name="Peng X."/>
            <person name="Thi-Ngoc H.P."/>
            <person name="Redder P."/>
            <person name="Schenk M.E."/>
            <person name="Theriault C."/>
            <person name="Tolstrup N."/>
            <person name="Charlebois R.L."/>
            <person name="Doolittle W.F."/>
            <person name="Duguet M."/>
            <person name="Gaasterland T."/>
            <person name="Garrett R.A."/>
            <person name="Ragan M.A."/>
            <person name="Sensen C.W."/>
            <person name="Van der Oost J."/>
        </authorList>
    </citation>
    <scope>NUCLEOTIDE SEQUENCE [LARGE SCALE GENOMIC DNA]</scope>
    <source>
        <strain>ATCC 35092 / DSM 1617 / JCM 11322 / P2</strain>
    </source>
</reference>
<reference key="2">
    <citation type="journal article" date="2012" name="Mol. Cell">
        <title>Structure and mechanism of the CMR complex for CRISPR-mediated antiviral immunity.</title>
        <authorList>
            <person name="Zhang J."/>
            <person name="Rouillon C."/>
            <person name="Kerou M."/>
            <person name="Reeks J."/>
            <person name="Brugger K."/>
            <person name="Graham S."/>
            <person name="Reimann J."/>
            <person name="Cannone G."/>
            <person name="Liu H."/>
            <person name="Albers S.V."/>
            <person name="Naismith J.H."/>
            <person name="Spagnolo L."/>
            <person name="White M.F."/>
        </authorList>
    </citation>
    <scope>X-RAY CRYSTALLOGRAPHY (2.08 ANGSTROMS) OF 2-190</scope>
    <scope>SUBUNIT</scope>
    <source>
        <strain>ATCC 35092 / DSM 1617 / JCM 11322 / P2</strain>
    </source>
</reference>
<comment type="function">
    <text evidence="1">CRISPR (clustered regularly interspaced short palindromic repeat) is an adaptive immune system that provides protection against mobile genetic elements (viruses, transposable elements and conjugative plasmids). CRISPR clusters contain spacers, sequences complementary to antecedent mobile elements, and target invading nucleic acids. CRISPR clusters are transcribed and processed into CRISPR RNA (crRNA) (By similarity).</text>
</comment>
<comment type="subunit">
    <text evidence="3">Homodimer.</text>
</comment>
<comment type="similarity">
    <text evidence="2">Belongs to the CRISPR system Cmr7 family.</text>
</comment>
<dbReference type="EMBL" id="AE006641">
    <property type="protein sequence ID" value="AAK41924.1"/>
    <property type="molecule type" value="Genomic_DNA"/>
</dbReference>
<dbReference type="PIR" id="E90333">
    <property type="entry name" value="E90333"/>
</dbReference>
<dbReference type="RefSeq" id="WP_010923682.1">
    <property type="nucleotide sequence ID" value="NC_002754.1"/>
</dbReference>
<dbReference type="PDB" id="2XVO">
    <property type="method" value="X-ray"/>
    <property type="resolution" value="2.08 A"/>
    <property type="chains" value="A/B/C/D=3-190"/>
</dbReference>
<dbReference type="PDBsum" id="2XVO"/>
<dbReference type="SMR" id="Q97XK8"/>
<dbReference type="STRING" id="273057.SSO1725"/>
<dbReference type="PaxDb" id="273057-SSO1725"/>
<dbReference type="EnsemblBacteria" id="AAK41924">
    <property type="protein sequence ID" value="AAK41924"/>
    <property type="gene ID" value="SSO1725"/>
</dbReference>
<dbReference type="GeneID" id="1454703"/>
<dbReference type="KEGG" id="sso:SSO1725"/>
<dbReference type="PATRIC" id="fig|273057.12.peg.1768"/>
<dbReference type="HOGENOM" id="CLU_1425150_0_0_2"/>
<dbReference type="InParanoid" id="Q97XK8"/>
<dbReference type="EvolutionaryTrace" id="Q97XK8"/>
<dbReference type="Proteomes" id="UP000001974">
    <property type="component" value="Chromosome"/>
</dbReference>
<dbReference type="GO" id="GO:0051607">
    <property type="term" value="P:defense response to virus"/>
    <property type="evidence" value="ECO:0007669"/>
    <property type="project" value="UniProtKB-KW"/>
</dbReference>
<dbReference type="Gene3D" id="2.60.120.1670">
    <property type="match status" value="1"/>
</dbReference>
<dbReference type="InterPro" id="IPR053743">
    <property type="entry name" value="CRISPR_Cmr7_comp"/>
</dbReference>
<dbReference type="Pfam" id="PF22392">
    <property type="entry name" value="Cmr7b-like"/>
    <property type="match status" value="1"/>
</dbReference>
<proteinExistence type="evidence at protein level"/>
<keyword id="KW-0002">3D-structure</keyword>
<keyword id="KW-0051">Antiviral defense</keyword>
<keyword id="KW-1185">Reference proteome</keyword>
<feature type="chain" id="PRO_0000418084" description="Putative CRISPR system CMR subunit Cmr7 2">
    <location>
        <begin position="1"/>
        <end position="190"/>
    </location>
</feature>
<feature type="strand" evidence="4">
    <location>
        <begin position="12"/>
        <end position="16"/>
    </location>
</feature>
<feature type="strand" evidence="4">
    <location>
        <begin position="23"/>
        <end position="27"/>
    </location>
</feature>
<feature type="strand" evidence="4">
    <location>
        <begin position="31"/>
        <end position="38"/>
    </location>
</feature>
<feature type="strand" evidence="4">
    <location>
        <begin position="41"/>
        <end position="43"/>
    </location>
</feature>
<feature type="strand" evidence="4">
    <location>
        <begin position="45"/>
        <end position="47"/>
    </location>
</feature>
<feature type="helix" evidence="4">
    <location>
        <begin position="51"/>
        <end position="53"/>
    </location>
</feature>
<feature type="strand" evidence="4">
    <location>
        <begin position="55"/>
        <end position="58"/>
    </location>
</feature>
<feature type="helix" evidence="4">
    <location>
        <begin position="59"/>
        <end position="61"/>
    </location>
</feature>
<feature type="strand" evidence="4">
    <location>
        <begin position="63"/>
        <end position="67"/>
    </location>
</feature>
<feature type="strand" evidence="4">
    <location>
        <begin position="70"/>
        <end position="81"/>
    </location>
</feature>
<feature type="strand" evidence="4">
    <location>
        <begin position="84"/>
        <end position="89"/>
    </location>
</feature>
<feature type="strand" evidence="4">
    <location>
        <begin position="96"/>
        <end position="105"/>
    </location>
</feature>
<feature type="helix" evidence="4">
    <location>
        <begin position="107"/>
        <end position="112"/>
    </location>
</feature>
<feature type="strand" evidence="4">
    <location>
        <begin position="119"/>
        <end position="123"/>
    </location>
</feature>
<feature type="helix" evidence="4">
    <location>
        <begin position="124"/>
        <end position="126"/>
    </location>
</feature>
<feature type="strand" evidence="4">
    <location>
        <begin position="127"/>
        <end position="130"/>
    </location>
</feature>
<feature type="strand" evidence="4">
    <location>
        <begin position="140"/>
        <end position="145"/>
    </location>
</feature>
<feature type="strand" evidence="4">
    <location>
        <begin position="156"/>
        <end position="158"/>
    </location>
</feature>
<feature type="strand" evidence="4">
    <location>
        <begin position="164"/>
        <end position="169"/>
    </location>
</feature>
<feature type="helix" evidence="4">
    <location>
        <begin position="179"/>
        <end position="185"/>
    </location>
</feature>
<feature type="strand" evidence="4">
    <location>
        <begin position="187"/>
        <end position="189"/>
    </location>
</feature>
<accession>Q97XK8</accession>
<sequence length="190" mass="21446">MSSPGGSQQVEWVFIPVIKDVTYEFKVDNNDNITELYVNGNKLGPASSLEMDFYFDVDVSNNQVRKFNNVFVLFGVIATKDSNKIKMQLTLNPCDFVRGFVFPSQDPSQLNNIFASNNKVSVSEKAFAILNRKKEGAVSSTINVYITQNTYTGNTKIEKIQQNTIIIEKNTGIVFKIPNDMLNIFRYSTT</sequence>
<gene>
    <name type="primary">cmr7b</name>
    <name type="ordered locus">SSO1725</name>
</gene>
<protein>
    <recommendedName>
        <fullName>Putative CRISPR system CMR subunit Cmr7 2</fullName>
    </recommendedName>
</protein>
<organism>
    <name type="scientific">Saccharolobus solfataricus (strain ATCC 35092 / DSM 1617 / JCM 11322 / P2)</name>
    <name type="common">Sulfolobus solfataricus</name>
    <dbReference type="NCBI Taxonomy" id="273057"/>
    <lineage>
        <taxon>Archaea</taxon>
        <taxon>Thermoproteota</taxon>
        <taxon>Thermoprotei</taxon>
        <taxon>Sulfolobales</taxon>
        <taxon>Sulfolobaceae</taxon>
        <taxon>Saccharolobus</taxon>
    </lineage>
</organism>